<reference key="1">
    <citation type="submission" date="2008-06" db="EMBL/GenBank/DDBJ databases">
        <title>Genome and proteome analysis of A. pleuropneumoniae serotype 7.</title>
        <authorList>
            <person name="Linke B."/>
            <person name="Buettner F."/>
            <person name="Martinez-Arias R."/>
            <person name="Goesmann A."/>
            <person name="Baltes N."/>
            <person name="Tegetmeyer H."/>
            <person name="Singh M."/>
            <person name="Gerlach G.F."/>
        </authorList>
    </citation>
    <scope>NUCLEOTIDE SEQUENCE [LARGE SCALE GENOMIC DNA]</scope>
    <source>
        <strain>AP76</strain>
    </source>
</reference>
<evidence type="ECO:0000255" key="1">
    <source>
        <dbReference type="HAMAP-Rule" id="MF_00611"/>
    </source>
</evidence>
<organism>
    <name type="scientific">Actinobacillus pleuropneumoniae serotype 7 (strain AP76)</name>
    <dbReference type="NCBI Taxonomy" id="537457"/>
    <lineage>
        <taxon>Bacteria</taxon>
        <taxon>Pseudomonadati</taxon>
        <taxon>Pseudomonadota</taxon>
        <taxon>Gammaproteobacteria</taxon>
        <taxon>Pasteurellales</taxon>
        <taxon>Pasteurellaceae</taxon>
        <taxon>Actinobacillus</taxon>
    </lineage>
</organism>
<name>FDHE_ACTP7</name>
<gene>
    <name evidence="1" type="primary">fdhE</name>
    <name type="ordered locus">APP7_0955</name>
</gene>
<sequence length="305" mass="34513">MSIRILPENEIKQAASSFQNPPLLFANPKNLYFRRAKRLRQLAENNPFGDYLEFAANLSEVQLDLLENHPIANYAEKLTACIEESNGQKPLNAKTFKRSSEWRELLLLLTEKFKPYANDTMLATIELLEKSSTSELEALADDLLNERYEAVGADKAVFLWAALSLYWTQLAQQLPRNTQTEVGERHTCPVCDSAPIVSVVHFGDTQGLRYLHCSLCESEWNMVRSQCSVCDQSGKLDYWSIDSVDAPVKAESCGDCESYLKVLYQEKDPHVEPVADDLGTLFLDAEMEQKGFARSGLNPFLFQVE</sequence>
<comment type="function">
    <text evidence="1">Necessary for formate dehydrogenase activity.</text>
</comment>
<comment type="subcellular location">
    <subcellularLocation>
        <location evidence="1">Cytoplasm</location>
    </subcellularLocation>
</comment>
<comment type="similarity">
    <text evidence="1">Belongs to the FdhE family.</text>
</comment>
<protein>
    <recommendedName>
        <fullName evidence="1">Protein FdhE homolog</fullName>
    </recommendedName>
</protein>
<proteinExistence type="inferred from homology"/>
<feature type="chain" id="PRO_1000130351" description="Protein FdhE homolog">
    <location>
        <begin position="1"/>
        <end position="305"/>
    </location>
</feature>
<dbReference type="EMBL" id="CP001091">
    <property type="protein sequence ID" value="ACE61607.1"/>
    <property type="molecule type" value="Genomic_DNA"/>
</dbReference>
<dbReference type="RefSeq" id="WP_005597424.1">
    <property type="nucleotide sequence ID" value="NC_010939.1"/>
</dbReference>
<dbReference type="SMR" id="B3GXP2"/>
<dbReference type="GeneID" id="48599082"/>
<dbReference type="KEGG" id="apa:APP7_0955"/>
<dbReference type="HOGENOM" id="CLU_055275_0_0_6"/>
<dbReference type="Proteomes" id="UP000001226">
    <property type="component" value="Chromosome"/>
</dbReference>
<dbReference type="GO" id="GO:0005829">
    <property type="term" value="C:cytosol"/>
    <property type="evidence" value="ECO:0007669"/>
    <property type="project" value="TreeGrafter"/>
</dbReference>
<dbReference type="GO" id="GO:0008199">
    <property type="term" value="F:ferric iron binding"/>
    <property type="evidence" value="ECO:0007669"/>
    <property type="project" value="TreeGrafter"/>
</dbReference>
<dbReference type="GO" id="GO:0051604">
    <property type="term" value="P:protein maturation"/>
    <property type="evidence" value="ECO:0007669"/>
    <property type="project" value="TreeGrafter"/>
</dbReference>
<dbReference type="CDD" id="cd16341">
    <property type="entry name" value="FdhE"/>
    <property type="match status" value="1"/>
</dbReference>
<dbReference type="FunFam" id="3.90.1670.10:FF:000001">
    <property type="entry name" value="Protein FdhE"/>
    <property type="match status" value="1"/>
</dbReference>
<dbReference type="Gene3D" id="3.90.1670.10">
    <property type="entry name" value="FdhE-like domain"/>
    <property type="match status" value="1"/>
</dbReference>
<dbReference type="HAMAP" id="MF_00611">
    <property type="entry name" value="FdeH"/>
    <property type="match status" value="1"/>
</dbReference>
<dbReference type="InterPro" id="IPR024064">
    <property type="entry name" value="FdhE-like_sf"/>
</dbReference>
<dbReference type="InterPro" id="IPR056796">
    <property type="entry name" value="FdhE_C"/>
</dbReference>
<dbReference type="InterPro" id="IPR056797">
    <property type="entry name" value="FdhE_central"/>
</dbReference>
<dbReference type="InterPro" id="IPR056774">
    <property type="entry name" value="FdhE_N"/>
</dbReference>
<dbReference type="InterPro" id="IPR006452">
    <property type="entry name" value="Formate_DH_accessory"/>
</dbReference>
<dbReference type="NCBIfam" id="TIGR01562">
    <property type="entry name" value="FdhE"/>
    <property type="match status" value="1"/>
</dbReference>
<dbReference type="NCBIfam" id="NF002925">
    <property type="entry name" value="PRK03564.1"/>
    <property type="match status" value="1"/>
</dbReference>
<dbReference type="PANTHER" id="PTHR37689">
    <property type="entry name" value="PROTEIN FDHE"/>
    <property type="match status" value="1"/>
</dbReference>
<dbReference type="PANTHER" id="PTHR37689:SF1">
    <property type="entry name" value="PROTEIN FDHE"/>
    <property type="match status" value="1"/>
</dbReference>
<dbReference type="Pfam" id="PF24860">
    <property type="entry name" value="FdhE_C"/>
    <property type="match status" value="1"/>
</dbReference>
<dbReference type="Pfam" id="PF24859">
    <property type="entry name" value="FdhE_central"/>
    <property type="match status" value="1"/>
</dbReference>
<dbReference type="Pfam" id="PF04216">
    <property type="entry name" value="FdhE_N"/>
    <property type="match status" value="1"/>
</dbReference>
<dbReference type="PIRSF" id="PIRSF018296">
    <property type="entry name" value="Format_dh_formtn"/>
    <property type="match status" value="1"/>
</dbReference>
<dbReference type="SUPFAM" id="SSF144020">
    <property type="entry name" value="FdhE-like"/>
    <property type="match status" value="1"/>
</dbReference>
<keyword id="KW-0963">Cytoplasm</keyword>
<accession>B3GXP2</accession>